<evidence type="ECO:0000255" key="1">
    <source>
        <dbReference type="HAMAP-Rule" id="MF_01350"/>
    </source>
</evidence>
<organism>
    <name type="scientific">Escherichia fergusonii (strain ATCC 35469 / DSM 13698 / CCUG 18766 / IAM 14443 / JCM 21226 / LMG 7866 / NBRC 102419 / NCTC 12128 / CDC 0568-73)</name>
    <dbReference type="NCBI Taxonomy" id="585054"/>
    <lineage>
        <taxon>Bacteria</taxon>
        <taxon>Pseudomonadati</taxon>
        <taxon>Pseudomonadota</taxon>
        <taxon>Gammaproteobacteria</taxon>
        <taxon>Enterobacterales</taxon>
        <taxon>Enterobacteriaceae</taxon>
        <taxon>Escherichia</taxon>
    </lineage>
</organism>
<reference key="1">
    <citation type="journal article" date="2009" name="PLoS Genet.">
        <title>Organised genome dynamics in the Escherichia coli species results in highly diverse adaptive paths.</title>
        <authorList>
            <person name="Touchon M."/>
            <person name="Hoede C."/>
            <person name="Tenaillon O."/>
            <person name="Barbe V."/>
            <person name="Baeriswyl S."/>
            <person name="Bidet P."/>
            <person name="Bingen E."/>
            <person name="Bonacorsi S."/>
            <person name="Bouchier C."/>
            <person name="Bouvet O."/>
            <person name="Calteau A."/>
            <person name="Chiapello H."/>
            <person name="Clermont O."/>
            <person name="Cruveiller S."/>
            <person name="Danchin A."/>
            <person name="Diard M."/>
            <person name="Dossat C."/>
            <person name="Karoui M.E."/>
            <person name="Frapy E."/>
            <person name="Garry L."/>
            <person name="Ghigo J.M."/>
            <person name="Gilles A.M."/>
            <person name="Johnson J."/>
            <person name="Le Bouguenec C."/>
            <person name="Lescat M."/>
            <person name="Mangenot S."/>
            <person name="Martinez-Jehanne V."/>
            <person name="Matic I."/>
            <person name="Nassif X."/>
            <person name="Oztas S."/>
            <person name="Petit M.A."/>
            <person name="Pichon C."/>
            <person name="Rouy Z."/>
            <person name="Ruf C.S."/>
            <person name="Schneider D."/>
            <person name="Tourret J."/>
            <person name="Vacherie B."/>
            <person name="Vallenet D."/>
            <person name="Medigue C."/>
            <person name="Rocha E.P.C."/>
            <person name="Denamur E."/>
        </authorList>
    </citation>
    <scope>NUCLEOTIDE SEQUENCE [LARGE SCALE GENOMIC DNA]</scope>
    <source>
        <strain>ATCC 35469 / DSM 13698 / BCRC 15582 / CCUG 18766 / IAM 14443 / JCM 21226 / LMG 7866 / NBRC 102419 / NCTC 12128 / CDC 0568-73</strain>
    </source>
</reference>
<protein>
    <recommendedName>
        <fullName evidence="1">NADH-quinone oxidoreductase subunit H</fullName>
        <ecNumber evidence="1">7.1.1.-</ecNumber>
    </recommendedName>
    <alternativeName>
        <fullName evidence="1">NADH dehydrogenase I subunit H</fullName>
    </alternativeName>
    <alternativeName>
        <fullName evidence="1">NDH-1 subunit H</fullName>
    </alternativeName>
</protein>
<dbReference type="EC" id="7.1.1.-" evidence="1"/>
<dbReference type="EMBL" id="CU928158">
    <property type="protein sequence ID" value="CAQ88423.1"/>
    <property type="molecule type" value="Genomic_DNA"/>
</dbReference>
<dbReference type="RefSeq" id="WP_000118684.1">
    <property type="nucleotide sequence ID" value="NC_011740.1"/>
</dbReference>
<dbReference type="SMR" id="B7LM50"/>
<dbReference type="GeneID" id="75058053"/>
<dbReference type="KEGG" id="efe:EFER_0888"/>
<dbReference type="HOGENOM" id="CLU_015134_0_1_6"/>
<dbReference type="OrthoDB" id="9803734at2"/>
<dbReference type="Proteomes" id="UP000000745">
    <property type="component" value="Chromosome"/>
</dbReference>
<dbReference type="GO" id="GO:0005886">
    <property type="term" value="C:plasma membrane"/>
    <property type="evidence" value="ECO:0007669"/>
    <property type="project" value="UniProtKB-SubCell"/>
</dbReference>
<dbReference type="GO" id="GO:0003954">
    <property type="term" value="F:NADH dehydrogenase activity"/>
    <property type="evidence" value="ECO:0007669"/>
    <property type="project" value="TreeGrafter"/>
</dbReference>
<dbReference type="GO" id="GO:0016655">
    <property type="term" value="F:oxidoreductase activity, acting on NAD(P)H, quinone or similar compound as acceptor"/>
    <property type="evidence" value="ECO:0007669"/>
    <property type="project" value="UniProtKB-UniRule"/>
</dbReference>
<dbReference type="GO" id="GO:0048038">
    <property type="term" value="F:quinone binding"/>
    <property type="evidence" value="ECO:0007669"/>
    <property type="project" value="UniProtKB-KW"/>
</dbReference>
<dbReference type="GO" id="GO:0009060">
    <property type="term" value="P:aerobic respiration"/>
    <property type="evidence" value="ECO:0007669"/>
    <property type="project" value="TreeGrafter"/>
</dbReference>
<dbReference type="HAMAP" id="MF_01350">
    <property type="entry name" value="NDH1_NuoH"/>
    <property type="match status" value="1"/>
</dbReference>
<dbReference type="InterPro" id="IPR001694">
    <property type="entry name" value="NADH_UbQ_OxRdtase_su1/FPO"/>
</dbReference>
<dbReference type="InterPro" id="IPR018086">
    <property type="entry name" value="NADH_UbQ_OxRdtase_su1_CS"/>
</dbReference>
<dbReference type="NCBIfam" id="NF004740">
    <property type="entry name" value="PRK06076.1-1"/>
    <property type="match status" value="1"/>
</dbReference>
<dbReference type="NCBIfam" id="NF004741">
    <property type="entry name" value="PRK06076.1-2"/>
    <property type="match status" value="1"/>
</dbReference>
<dbReference type="PANTHER" id="PTHR11432">
    <property type="entry name" value="NADH DEHYDROGENASE SUBUNIT 1"/>
    <property type="match status" value="1"/>
</dbReference>
<dbReference type="PANTHER" id="PTHR11432:SF3">
    <property type="entry name" value="NADH-UBIQUINONE OXIDOREDUCTASE CHAIN 1"/>
    <property type="match status" value="1"/>
</dbReference>
<dbReference type="Pfam" id="PF00146">
    <property type="entry name" value="NADHdh"/>
    <property type="match status" value="1"/>
</dbReference>
<dbReference type="PROSITE" id="PS00667">
    <property type="entry name" value="COMPLEX1_ND1_1"/>
    <property type="match status" value="1"/>
</dbReference>
<dbReference type="PROSITE" id="PS00668">
    <property type="entry name" value="COMPLEX1_ND1_2"/>
    <property type="match status" value="1"/>
</dbReference>
<name>NUOH_ESCF3</name>
<keyword id="KW-0997">Cell inner membrane</keyword>
<keyword id="KW-1003">Cell membrane</keyword>
<keyword id="KW-0472">Membrane</keyword>
<keyword id="KW-0520">NAD</keyword>
<keyword id="KW-0874">Quinone</keyword>
<keyword id="KW-1278">Translocase</keyword>
<keyword id="KW-0812">Transmembrane</keyword>
<keyword id="KW-1133">Transmembrane helix</keyword>
<keyword id="KW-0830">Ubiquinone</keyword>
<accession>B7LM50</accession>
<comment type="function">
    <text evidence="1">NDH-1 shuttles electrons from NADH, via FMN and iron-sulfur (Fe-S) centers, to quinones in the respiratory chain. The immediate electron acceptor for the enzyme in this species is believed to be ubiquinone. Couples the redox reaction to proton translocation (for every two electrons transferred, four hydrogen ions are translocated across the cytoplasmic membrane), and thus conserves the redox energy in a proton gradient. This subunit may bind ubiquinone.</text>
</comment>
<comment type="catalytic activity">
    <reaction evidence="1">
        <text>a quinone + NADH + 5 H(+)(in) = a quinol + NAD(+) + 4 H(+)(out)</text>
        <dbReference type="Rhea" id="RHEA:57888"/>
        <dbReference type="ChEBI" id="CHEBI:15378"/>
        <dbReference type="ChEBI" id="CHEBI:24646"/>
        <dbReference type="ChEBI" id="CHEBI:57540"/>
        <dbReference type="ChEBI" id="CHEBI:57945"/>
        <dbReference type="ChEBI" id="CHEBI:132124"/>
    </reaction>
</comment>
<comment type="subunit">
    <text evidence="1">NDH-1 is composed of 13 different subunits. Subunits NuoA, H, J, K, L, M, N constitute the membrane sector of the complex.</text>
</comment>
<comment type="subcellular location">
    <subcellularLocation>
        <location evidence="1">Cell inner membrane</location>
        <topology evidence="1">Multi-pass membrane protein</topology>
    </subcellularLocation>
</comment>
<comment type="similarity">
    <text evidence="1">Belongs to the complex I subunit 1 family.</text>
</comment>
<sequence length="325" mass="36253">MSWLSPELIEILLTILKAVVILLVVVTCGAFMSFGERRLLGLFQNRYGPNRVGWGGSLQLVADMIKMFFKEDWIPKFSDRVIFTLAPMIAFTSLLLAFAIVPVSPGWVVADLNIGILFFLMMAGLAVYAVLFAGWSSNNKYSLLGAMRASAQTLSYEVFLGLSLMGVVAQAGSFNMTDIVNSQAHVWNVIPQFFGFITFAIAGVAVCHRHPFDQPEAEQELADGYHIEYSGMKFGLFFVGEYIGIVTISALMVTLFFGGWQGPFLPPFIWFALKTAFFMMMFILIRASLPRPRYDQVMSFGWKICLPLTLINLLVTAAVILWQAQ</sequence>
<feature type="chain" id="PRO_1000143599" description="NADH-quinone oxidoreductase subunit H">
    <location>
        <begin position="1"/>
        <end position="325"/>
    </location>
</feature>
<feature type="transmembrane region" description="Helical" evidence="1">
    <location>
        <begin position="11"/>
        <end position="31"/>
    </location>
</feature>
<feature type="transmembrane region" description="Helical" evidence="1">
    <location>
        <begin position="81"/>
        <end position="101"/>
    </location>
</feature>
<feature type="transmembrane region" description="Helical" evidence="1">
    <location>
        <begin position="114"/>
        <end position="134"/>
    </location>
</feature>
<feature type="transmembrane region" description="Helical" evidence="1">
    <location>
        <begin position="154"/>
        <end position="174"/>
    </location>
</feature>
<feature type="transmembrane region" description="Helical" evidence="1">
    <location>
        <begin position="186"/>
        <end position="206"/>
    </location>
</feature>
<feature type="transmembrane region" description="Helical" evidence="1">
    <location>
        <begin position="237"/>
        <end position="257"/>
    </location>
</feature>
<feature type="transmembrane region" description="Helical" evidence="1">
    <location>
        <begin position="265"/>
        <end position="285"/>
    </location>
</feature>
<feature type="transmembrane region" description="Helical" evidence="1">
    <location>
        <begin position="304"/>
        <end position="324"/>
    </location>
</feature>
<gene>
    <name evidence="1" type="primary">nuoH</name>
    <name type="ordered locus">EFER_0888</name>
</gene>
<proteinExistence type="inferred from homology"/>